<gene>
    <name evidence="1" type="primary">rplY</name>
    <name evidence="1" type="synonym">ctc</name>
    <name type="ordered locus">Mext_2475</name>
</gene>
<name>RL25_METEP</name>
<evidence type="ECO:0000255" key="1">
    <source>
        <dbReference type="HAMAP-Rule" id="MF_01334"/>
    </source>
</evidence>
<evidence type="ECO:0000256" key="2">
    <source>
        <dbReference type="SAM" id="MobiDB-lite"/>
    </source>
</evidence>
<evidence type="ECO:0000305" key="3"/>
<proteinExistence type="inferred from homology"/>
<comment type="function">
    <text evidence="1">This is one of the proteins that binds to the 5S RNA in the ribosome where it forms part of the central protuberance.</text>
</comment>
<comment type="subunit">
    <text evidence="1">Part of the 50S ribosomal subunit; part of the 5S rRNA/L5/L18/L25 subcomplex. Contacts the 5S rRNA. Binds to the 5S rRNA independently of L5 and L18.</text>
</comment>
<comment type="similarity">
    <text evidence="1">Belongs to the bacterial ribosomal protein bL25 family. CTC subfamily.</text>
</comment>
<dbReference type="EMBL" id="CP000908">
    <property type="protein sequence ID" value="ABY30870.1"/>
    <property type="molecule type" value="Genomic_DNA"/>
</dbReference>
<dbReference type="RefSeq" id="WP_012253898.1">
    <property type="nucleotide sequence ID" value="NC_010172.1"/>
</dbReference>
<dbReference type="SMR" id="A9W5L4"/>
<dbReference type="GeneID" id="72990106"/>
<dbReference type="KEGG" id="mex:Mext_2475"/>
<dbReference type="eggNOG" id="COG1825">
    <property type="taxonomic scope" value="Bacteria"/>
</dbReference>
<dbReference type="HOGENOM" id="CLU_075939_0_0_5"/>
<dbReference type="BioCyc" id="MEXT419610:MEXT_RS12485-MONOMER"/>
<dbReference type="GO" id="GO:0022625">
    <property type="term" value="C:cytosolic large ribosomal subunit"/>
    <property type="evidence" value="ECO:0007669"/>
    <property type="project" value="TreeGrafter"/>
</dbReference>
<dbReference type="GO" id="GO:0008097">
    <property type="term" value="F:5S rRNA binding"/>
    <property type="evidence" value="ECO:0007669"/>
    <property type="project" value="InterPro"/>
</dbReference>
<dbReference type="GO" id="GO:0003735">
    <property type="term" value="F:structural constituent of ribosome"/>
    <property type="evidence" value="ECO:0007669"/>
    <property type="project" value="InterPro"/>
</dbReference>
<dbReference type="GO" id="GO:0006412">
    <property type="term" value="P:translation"/>
    <property type="evidence" value="ECO:0007669"/>
    <property type="project" value="UniProtKB-UniRule"/>
</dbReference>
<dbReference type="CDD" id="cd00495">
    <property type="entry name" value="Ribosomal_L25_TL5_CTC"/>
    <property type="match status" value="1"/>
</dbReference>
<dbReference type="Gene3D" id="2.170.120.20">
    <property type="entry name" value="Ribosomal protein L25, beta domain"/>
    <property type="match status" value="1"/>
</dbReference>
<dbReference type="Gene3D" id="2.40.240.10">
    <property type="entry name" value="Ribosomal Protein L25, Chain P"/>
    <property type="match status" value="1"/>
</dbReference>
<dbReference type="HAMAP" id="MF_01334">
    <property type="entry name" value="Ribosomal_bL25_CTC"/>
    <property type="match status" value="1"/>
</dbReference>
<dbReference type="InterPro" id="IPR020056">
    <property type="entry name" value="Rbsml_bL25/Gln-tRNA_synth_N"/>
</dbReference>
<dbReference type="InterPro" id="IPR011035">
    <property type="entry name" value="Ribosomal_bL25/Gln-tRNA_synth"/>
</dbReference>
<dbReference type="InterPro" id="IPR020057">
    <property type="entry name" value="Ribosomal_bL25_b-dom"/>
</dbReference>
<dbReference type="InterPro" id="IPR037121">
    <property type="entry name" value="Ribosomal_bL25_C"/>
</dbReference>
<dbReference type="InterPro" id="IPR001021">
    <property type="entry name" value="Ribosomal_bL25_long"/>
</dbReference>
<dbReference type="InterPro" id="IPR029751">
    <property type="entry name" value="Ribosomal_L25_dom"/>
</dbReference>
<dbReference type="InterPro" id="IPR020930">
    <property type="entry name" value="Ribosomal_uL5_bac-type"/>
</dbReference>
<dbReference type="NCBIfam" id="TIGR00731">
    <property type="entry name" value="bL25_bact_ctc"/>
    <property type="match status" value="1"/>
</dbReference>
<dbReference type="NCBIfam" id="NF004128">
    <property type="entry name" value="PRK05618.1-2"/>
    <property type="match status" value="1"/>
</dbReference>
<dbReference type="PANTHER" id="PTHR33284">
    <property type="entry name" value="RIBOSOMAL PROTEIN L25/GLN-TRNA SYNTHETASE, ANTI-CODON-BINDING DOMAIN-CONTAINING PROTEIN"/>
    <property type="match status" value="1"/>
</dbReference>
<dbReference type="PANTHER" id="PTHR33284:SF1">
    <property type="entry name" value="RIBOSOMAL PROTEIN L25_GLN-TRNA SYNTHETASE, ANTI-CODON-BINDING DOMAIN-CONTAINING PROTEIN"/>
    <property type="match status" value="1"/>
</dbReference>
<dbReference type="Pfam" id="PF01386">
    <property type="entry name" value="Ribosomal_L25p"/>
    <property type="match status" value="1"/>
</dbReference>
<dbReference type="Pfam" id="PF14693">
    <property type="entry name" value="Ribosomal_TL5_C"/>
    <property type="match status" value="1"/>
</dbReference>
<dbReference type="SUPFAM" id="SSF50715">
    <property type="entry name" value="Ribosomal protein L25-like"/>
    <property type="match status" value="1"/>
</dbReference>
<reference key="1">
    <citation type="submission" date="2007-12" db="EMBL/GenBank/DDBJ databases">
        <title>Complete sequence of Methylobacterium extorquens PA1.</title>
        <authorList>
            <consortium name="US DOE Joint Genome Institute"/>
            <person name="Copeland A."/>
            <person name="Lucas S."/>
            <person name="Lapidus A."/>
            <person name="Barry K."/>
            <person name="Glavina del Rio T."/>
            <person name="Dalin E."/>
            <person name="Tice H."/>
            <person name="Pitluck S."/>
            <person name="Saunders E."/>
            <person name="Brettin T."/>
            <person name="Bruce D."/>
            <person name="Detter J.C."/>
            <person name="Han C."/>
            <person name="Schmutz J."/>
            <person name="Larimer F."/>
            <person name="Land M."/>
            <person name="Hauser L."/>
            <person name="Kyrpides N."/>
            <person name="Kim E."/>
            <person name="Marx C."/>
            <person name="Richardson P."/>
        </authorList>
    </citation>
    <scope>NUCLEOTIDE SEQUENCE [LARGE SCALE GENOMIC DNA]</scope>
    <source>
        <strain>PA1</strain>
    </source>
</reference>
<protein>
    <recommendedName>
        <fullName evidence="1">Large ribosomal subunit protein bL25</fullName>
    </recommendedName>
    <alternativeName>
        <fullName evidence="3">50S ribosomal protein L25</fullName>
    </alternativeName>
    <alternativeName>
        <fullName evidence="1">General stress protein CTC</fullName>
    </alternativeName>
</protein>
<accession>A9W5L4</accession>
<keyword id="KW-0687">Ribonucleoprotein</keyword>
<keyword id="KW-0689">Ribosomal protein</keyword>
<keyword id="KW-0694">RNA-binding</keyword>
<keyword id="KW-0699">rRNA-binding</keyword>
<feature type="chain" id="PRO_1000142532" description="Large ribosomal subunit protein bL25">
    <location>
        <begin position="1"/>
        <end position="228"/>
    </location>
</feature>
<feature type="region of interest" description="Disordered" evidence="2">
    <location>
        <begin position="196"/>
        <end position="228"/>
    </location>
</feature>
<feature type="compositionally biased region" description="Basic and acidic residues" evidence="2">
    <location>
        <begin position="209"/>
        <end position="228"/>
    </location>
</feature>
<sequence>MSATKTLEAVARDRVGKGAARAVRRQGQIPAVIYGGNQAPQAIAIDLIRARTLIYAGGFKTTVFEIDAGGKKTRAIPRDYQLDPVSGVPLHVDFLRVVAGQTVTVDVPVHFVNEDQAPGIKQKGGTLNVALHTLSLEVAPDQIPDAIEVDLAGREIGDVIHASDLRLPAGTYTGEPTDTVANLLPPTVLGADVEAEEAAVAEAQSAESAEGKAEAEAEATNEKNKSEA</sequence>
<organism>
    <name type="scientific">Methylorubrum extorquens (strain PA1)</name>
    <name type="common">Methylobacterium extorquens</name>
    <dbReference type="NCBI Taxonomy" id="419610"/>
    <lineage>
        <taxon>Bacteria</taxon>
        <taxon>Pseudomonadati</taxon>
        <taxon>Pseudomonadota</taxon>
        <taxon>Alphaproteobacteria</taxon>
        <taxon>Hyphomicrobiales</taxon>
        <taxon>Methylobacteriaceae</taxon>
        <taxon>Methylorubrum</taxon>
    </lineage>
</organism>